<reference key="1">
    <citation type="book" date="2006" name="Gram positive pathogens, 2nd edition">
        <title>The Staphylococcus aureus NCTC 8325 genome.</title>
        <editorList>
            <person name="Fischetti V."/>
            <person name="Novick R."/>
            <person name="Ferretti J."/>
            <person name="Portnoy D."/>
            <person name="Rood J."/>
        </editorList>
        <authorList>
            <person name="Gillaspy A.F."/>
            <person name="Worrell V."/>
            <person name="Orvis J."/>
            <person name="Roe B.A."/>
            <person name="Dyer D.W."/>
            <person name="Iandolo J.J."/>
        </authorList>
    </citation>
    <scope>NUCLEOTIDE SEQUENCE [LARGE SCALE GENOMIC DNA]</scope>
    <source>
        <strain>NCTC 8325 / PS 47</strain>
    </source>
</reference>
<organism>
    <name type="scientific">Staphylococcus aureus (strain NCTC 8325 / PS 47)</name>
    <dbReference type="NCBI Taxonomy" id="93061"/>
    <lineage>
        <taxon>Bacteria</taxon>
        <taxon>Bacillati</taxon>
        <taxon>Bacillota</taxon>
        <taxon>Bacilli</taxon>
        <taxon>Bacillales</taxon>
        <taxon>Staphylococcaceae</taxon>
        <taxon>Staphylococcus</taxon>
    </lineage>
</organism>
<evidence type="ECO:0000250" key="1">
    <source>
        <dbReference type="UniProtKB" id="P25526"/>
    </source>
</evidence>
<evidence type="ECO:0000305" key="2"/>
<comment type="catalytic activity">
    <reaction evidence="2">
        <text>an aldehyde + NAD(+) + H2O = a carboxylate + NADH + 2 H(+)</text>
        <dbReference type="Rhea" id="RHEA:16185"/>
        <dbReference type="ChEBI" id="CHEBI:15377"/>
        <dbReference type="ChEBI" id="CHEBI:15378"/>
        <dbReference type="ChEBI" id="CHEBI:17478"/>
        <dbReference type="ChEBI" id="CHEBI:29067"/>
        <dbReference type="ChEBI" id="CHEBI:57540"/>
        <dbReference type="ChEBI" id="CHEBI:57945"/>
        <dbReference type="EC" id="1.2.1.3"/>
    </reaction>
</comment>
<comment type="similarity">
    <text evidence="2">Belongs to the aldehyde dehydrogenase family.</text>
</comment>
<accession>Q2FWD6</accession>
<name>ALDH_STAA8</name>
<keyword id="KW-0520">NAD</keyword>
<keyword id="KW-0560">Oxidoreductase</keyword>
<keyword id="KW-1185">Reference proteome</keyword>
<gene>
    <name type="ordered locus">SAOUHSC_02363</name>
</gene>
<proteinExistence type="inferred from homology"/>
<dbReference type="EC" id="1.2.1.3" evidence="2"/>
<dbReference type="EMBL" id="CP000253">
    <property type="protein sequence ID" value="ABD31394.1"/>
    <property type="molecule type" value="Genomic_DNA"/>
</dbReference>
<dbReference type="RefSeq" id="WP_001206093.1">
    <property type="nucleotide sequence ID" value="NZ_LS483365.1"/>
</dbReference>
<dbReference type="RefSeq" id="YP_500839.1">
    <property type="nucleotide sequence ID" value="NC_007795.1"/>
</dbReference>
<dbReference type="SMR" id="Q2FWD6"/>
<dbReference type="STRING" id="93061.SAOUHSC_02363"/>
<dbReference type="PaxDb" id="1280-SAXN108_2367"/>
<dbReference type="GeneID" id="3919406"/>
<dbReference type="KEGG" id="sao:SAOUHSC_02363"/>
<dbReference type="PATRIC" id="fig|93061.5.peg.2140"/>
<dbReference type="eggNOG" id="COG1012">
    <property type="taxonomic scope" value="Bacteria"/>
</dbReference>
<dbReference type="HOGENOM" id="CLU_005391_0_2_9"/>
<dbReference type="OrthoDB" id="9762913at2"/>
<dbReference type="PRO" id="PR:Q2FWD6"/>
<dbReference type="Proteomes" id="UP000008816">
    <property type="component" value="Chromosome"/>
</dbReference>
<dbReference type="GO" id="GO:0004029">
    <property type="term" value="F:aldehyde dehydrogenase (NAD+) activity"/>
    <property type="evidence" value="ECO:0007669"/>
    <property type="project" value="UniProtKB-EC"/>
</dbReference>
<dbReference type="GO" id="GO:0006081">
    <property type="term" value="P:aldehyde metabolic process"/>
    <property type="evidence" value="ECO:0007669"/>
    <property type="project" value="InterPro"/>
</dbReference>
<dbReference type="CDD" id="cd07138">
    <property type="entry name" value="ALDH_CddD_SSP0762"/>
    <property type="match status" value="1"/>
</dbReference>
<dbReference type="FunFam" id="3.40.605.10:FF:000026">
    <property type="entry name" value="Aldehyde dehydrogenase, putative"/>
    <property type="match status" value="1"/>
</dbReference>
<dbReference type="FunFam" id="3.40.309.10:FF:000012">
    <property type="entry name" value="Betaine aldehyde dehydrogenase"/>
    <property type="match status" value="1"/>
</dbReference>
<dbReference type="FunFam" id="3.40.605.10:FF:000007">
    <property type="entry name" value="NAD/NADP-dependent betaine aldehyde dehydrogenase"/>
    <property type="match status" value="1"/>
</dbReference>
<dbReference type="Gene3D" id="3.40.605.10">
    <property type="entry name" value="Aldehyde Dehydrogenase, Chain A, domain 1"/>
    <property type="match status" value="1"/>
</dbReference>
<dbReference type="Gene3D" id="3.40.309.10">
    <property type="entry name" value="Aldehyde Dehydrogenase, Chain A, domain 2"/>
    <property type="match status" value="1"/>
</dbReference>
<dbReference type="InterPro" id="IPR016161">
    <property type="entry name" value="Ald_DH/histidinol_DH"/>
</dbReference>
<dbReference type="InterPro" id="IPR016163">
    <property type="entry name" value="Ald_DH_C"/>
</dbReference>
<dbReference type="InterPro" id="IPR016160">
    <property type="entry name" value="Ald_DH_CS_CYS"/>
</dbReference>
<dbReference type="InterPro" id="IPR029510">
    <property type="entry name" value="Ald_DH_CS_GLU"/>
</dbReference>
<dbReference type="InterPro" id="IPR016162">
    <property type="entry name" value="Ald_DH_N"/>
</dbReference>
<dbReference type="InterPro" id="IPR015590">
    <property type="entry name" value="Aldehyde_DH_dom"/>
</dbReference>
<dbReference type="InterPro" id="IPR012394">
    <property type="entry name" value="Aldehyde_DH_NAD(P)"/>
</dbReference>
<dbReference type="PANTHER" id="PTHR42804">
    <property type="entry name" value="ALDEHYDE DEHYDROGENASE"/>
    <property type="match status" value="1"/>
</dbReference>
<dbReference type="PANTHER" id="PTHR42804:SF1">
    <property type="entry name" value="ALDEHYDE DEHYDROGENASE-RELATED"/>
    <property type="match status" value="1"/>
</dbReference>
<dbReference type="Pfam" id="PF00171">
    <property type="entry name" value="Aldedh"/>
    <property type="match status" value="1"/>
</dbReference>
<dbReference type="PIRSF" id="PIRSF036492">
    <property type="entry name" value="ALDH"/>
    <property type="match status" value="1"/>
</dbReference>
<dbReference type="SUPFAM" id="SSF53720">
    <property type="entry name" value="ALDH-like"/>
    <property type="match status" value="1"/>
</dbReference>
<dbReference type="PROSITE" id="PS00070">
    <property type="entry name" value="ALDEHYDE_DEHYDR_CYS"/>
    <property type="match status" value="1"/>
</dbReference>
<dbReference type="PROSITE" id="PS00687">
    <property type="entry name" value="ALDEHYDE_DEHYDR_GLU"/>
    <property type="match status" value="1"/>
</dbReference>
<feature type="chain" id="PRO_0000293559" description="Putative aldehyde dehydrogenase">
    <location>
        <begin position="1"/>
        <end position="475"/>
    </location>
</feature>
<feature type="active site" description="Proton acceptor" evidence="1">
    <location>
        <position position="245"/>
    </location>
</feature>
<feature type="active site" description="Nucleophile" evidence="1">
    <location>
        <position position="279"/>
    </location>
</feature>
<feature type="binding site" evidence="1">
    <location>
        <begin position="146"/>
        <end position="147"/>
    </location>
    <ligand>
        <name>NAD(+)</name>
        <dbReference type="ChEBI" id="CHEBI:57540"/>
    </ligand>
</feature>
<feature type="binding site" evidence="1">
    <location>
        <begin position="223"/>
        <end position="224"/>
    </location>
    <ligand>
        <name>NAD(+)</name>
        <dbReference type="ChEBI" id="CHEBI:57540"/>
    </ligand>
</feature>
<feature type="binding site" evidence="1">
    <location>
        <position position="246"/>
    </location>
    <ligand>
        <name>NAD(+)</name>
        <dbReference type="ChEBI" id="CHEBI:57540"/>
    </ligand>
</feature>
<feature type="binding site" evidence="1">
    <location>
        <position position="379"/>
    </location>
    <ligand>
        <name>NAD(+)</name>
        <dbReference type="ChEBI" id="CHEBI:57540"/>
    </ligand>
</feature>
<protein>
    <recommendedName>
        <fullName evidence="2">Putative aldehyde dehydrogenase</fullName>
        <ecNumber evidence="2">1.2.1.3</ecNumber>
    </recommendedName>
</protein>
<sequence>MRDYTKQYINGEWVESNSNETIEVINPATEEVIGKVAKGNKADVDKAVEAADDVYLEFRHTSVKERQALLDKIVKEYENRKDDIVQAITDELGAPLSLSERVHYQMGLNHFVAARDALDNYEFEERRGDDLVVKEAIGVSGLITPWNFPTNQTSLKLAAAFAAGSPVVLKPSEETPFAAVILAEIFDKVGVPKGVFNLVNGDGAGVGNPLSEHPKVRMMSFTGSGPTGSKIMEKAAKDFKKVSLELGGKSPYIVLDDVDIKEAAKATTGKVVNNTGQVCTAGTRVLVPNKIKDAFLAELKEQFSQVRVGNPREDGTQVGPIISKKQFDQVQNYINKGIEEGAELFYGGPGKPEGLEKGYFARPTIFINVDNQMTIAQEEIFGPVMSVITYNDLDEAIQIANDTKYGLAGYVIGKDKETLHKVARSIEAGTVEINEAGRKPDLPFGGYKQSGLGREWGDYGIEEFLEVKSIAGYFK</sequence>